<proteinExistence type="evidence at transcript level"/>
<protein>
    <recommendedName>
        <fullName>Ammonium transporter Rh type C</fullName>
    </recommendedName>
    <alternativeName>
        <fullName>Rhesus blood group family type C glycoprotein</fullName>
        <shortName>Rh family type C glycoprotein</shortName>
        <shortName>Rh type C glycoprotein</shortName>
    </alternativeName>
</protein>
<reference key="1">
    <citation type="journal article" date="2005" name="Proc. Natl. Acad. Sci. U.S.A.">
        <title>Evolutionary conservation and diversification of Rh family genes and proteins.</title>
        <authorList>
            <person name="Huang C.-H."/>
            <person name="Peng J."/>
        </authorList>
    </citation>
    <scope>NUCLEOTIDE SEQUENCE [MRNA]</scope>
</reference>
<reference key="2">
    <citation type="journal article" date="2004" name="Nature">
        <title>Genome duplication in the teleost fish Tetraodon nigroviridis reveals the early vertebrate proto-karyotype.</title>
        <authorList>
            <person name="Jaillon O."/>
            <person name="Aury J.-M."/>
            <person name="Brunet F."/>
            <person name="Petit J.-L."/>
            <person name="Stange-Thomann N."/>
            <person name="Mauceli E."/>
            <person name="Bouneau L."/>
            <person name="Fischer C."/>
            <person name="Ozouf-Costaz C."/>
            <person name="Bernot A."/>
            <person name="Nicaud S."/>
            <person name="Jaffe D."/>
            <person name="Fisher S."/>
            <person name="Lutfalla G."/>
            <person name="Dossat C."/>
            <person name="Segurens B."/>
            <person name="Dasilva C."/>
            <person name="Salanoubat M."/>
            <person name="Levy M."/>
            <person name="Boudet N."/>
            <person name="Castellano S."/>
            <person name="Anthouard V."/>
            <person name="Jubin C."/>
            <person name="Castelli V."/>
            <person name="Katinka M."/>
            <person name="Vacherie B."/>
            <person name="Biemont C."/>
            <person name="Skalli Z."/>
            <person name="Cattolico L."/>
            <person name="Poulain J."/>
            <person name="De Berardinis V."/>
            <person name="Cruaud C."/>
            <person name="Duprat S."/>
            <person name="Brottier P."/>
            <person name="Coutanceau J.-P."/>
            <person name="Gouzy J."/>
            <person name="Parra G."/>
            <person name="Lardier G."/>
            <person name="Chapple C."/>
            <person name="McKernan K.J."/>
            <person name="McEwan P."/>
            <person name="Bosak S."/>
            <person name="Kellis M."/>
            <person name="Volff J.-N."/>
            <person name="Guigo R."/>
            <person name="Zody M.C."/>
            <person name="Mesirov J."/>
            <person name="Lindblad-Toh K."/>
            <person name="Birren B."/>
            <person name="Nusbaum C."/>
            <person name="Kahn D."/>
            <person name="Robinson-Rechavi M."/>
            <person name="Laudet V."/>
            <person name="Schachter V."/>
            <person name="Quetier F."/>
            <person name="Saurin W."/>
            <person name="Scarpelli C."/>
            <person name="Wincker P."/>
            <person name="Lander E.S."/>
            <person name="Weissenbach J."/>
            <person name="Roest Crollius H."/>
        </authorList>
    </citation>
    <scope>NUCLEOTIDE SEQUENCE [LARGE SCALE GENOMIC DNA]</scope>
</reference>
<accession>Q3BBX7</accession>
<accession>Q4S7D9</accession>
<organism>
    <name type="scientific">Tetraodon nigroviridis</name>
    <name type="common">Spotted green pufferfish</name>
    <name type="synonym">Chelonodon nigroviridis</name>
    <dbReference type="NCBI Taxonomy" id="99883"/>
    <lineage>
        <taxon>Eukaryota</taxon>
        <taxon>Metazoa</taxon>
        <taxon>Chordata</taxon>
        <taxon>Craniata</taxon>
        <taxon>Vertebrata</taxon>
        <taxon>Euteleostomi</taxon>
        <taxon>Actinopterygii</taxon>
        <taxon>Neopterygii</taxon>
        <taxon>Teleostei</taxon>
        <taxon>Neoteleostei</taxon>
        <taxon>Acanthomorphata</taxon>
        <taxon>Eupercaria</taxon>
        <taxon>Tetraodontiformes</taxon>
        <taxon>Tetradontoidea</taxon>
        <taxon>Tetraodontidae</taxon>
        <taxon>Tetraodon</taxon>
    </lineage>
</organism>
<gene>
    <name type="primary">rhcg</name>
    <name type="ORF">GSTENG00022829001</name>
</gene>
<sequence length="475" mass="52622">MGCVQSFRNFCDRPKNTNVRISLPAVCFVWQIAMIILFGVFIRYNEEADTHWVEYRKKENISSDIENDFYFRYPSFQDVHVMIFVGFGFLMTFLKRYSFGAVGFNFLIAAFGLQWALLMQGWFHSLDYTDGKIKIGIENLINADFCVAGCLIAYGAVLGKVSPVQLMVLTLFGITLFAVEEYIILNLIHARDAGGSMVIHTFGGYYGLSISWMLYRPNLEQSSNLQGSVYQSDVFAMIGTLFLWMFWPSFNSAITDHGDGQHRAAINTYLALASTVLTTVAISSLFQKHGKLDMVHIQNSTLAGGVAVGTAAEFMLMPYGSLIVGFCCGIISTLGYIYLTPFMEKYLKIQDTCGIHNLHAMPGLIGGIVGAITAAAATESVYGKEGLVNTFDFVGPFKNMVPTTQGGHQAAGLCVAICFGIGGGIMVGCILRLPIWCDPADDNCFNDEPYWELPEEEEIIPPILHYNNHMVNKDV</sequence>
<comment type="function">
    <text evidence="1">Functions as an ammonia transporter. May play a role in the elimination of ammonia in the gill (By similarity).</text>
</comment>
<comment type="subunit">
    <text>Homotrimer.</text>
</comment>
<comment type="subcellular location">
    <subcellularLocation>
        <location evidence="1">Apical cell membrane</location>
        <topology evidence="1">Multi-pass membrane protein</topology>
    </subcellularLocation>
</comment>
<comment type="similarity">
    <text evidence="3">Belongs to the ammonium transporter (TC 2.A.49) family. Rh subfamily.</text>
</comment>
<comment type="sequence caution" evidence="3">
    <conflict type="erroneous gene model prediction">
        <sequence resource="EMBL-CDS" id="CAG03443"/>
    </conflict>
</comment>
<feature type="chain" id="PRO_0000283591" description="Ammonium transporter Rh type C">
    <location>
        <begin position="1"/>
        <end position="475"/>
    </location>
</feature>
<feature type="topological domain" description="Cytoplasmic" evidence="2">
    <location>
        <begin position="1"/>
        <end position="20"/>
    </location>
</feature>
<feature type="transmembrane region" description="Helical" evidence="2">
    <location>
        <begin position="21"/>
        <end position="41"/>
    </location>
</feature>
<feature type="topological domain" description="Extracellular" evidence="2">
    <location>
        <begin position="42"/>
        <end position="73"/>
    </location>
</feature>
<feature type="transmembrane region" description="Helical" evidence="2">
    <location>
        <begin position="74"/>
        <end position="94"/>
    </location>
</feature>
<feature type="topological domain" description="Cytoplasmic" evidence="2">
    <location>
        <begin position="95"/>
        <end position="98"/>
    </location>
</feature>
<feature type="transmembrane region" description="Helical" evidence="2">
    <location>
        <begin position="99"/>
        <end position="119"/>
    </location>
</feature>
<feature type="topological domain" description="Extracellular" evidence="2">
    <location>
        <begin position="120"/>
        <end position="138"/>
    </location>
</feature>
<feature type="transmembrane region" description="Helical" evidence="2">
    <location>
        <begin position="139"/>
        <end position="159"/>
    </location>
</feature>
<feature type="topological domain" description="Cytoplasmic" evidence="2">
    <location>
        <begin position="160"/>
        <end position="167"/>
    </location>
</feature>
<feature type="transmembrane region" description="Helical" evidence="2">
    <location>
        <begin position="168"/>
        <end position="188"/>
    </location>
</feature>
<feature type="topological domain" description="Extracellular" evidence="2">
    <location>
        <begin position="189"/>
        <end position="193"/>
    </location>
</feature>
<feature type="transmembrane region" description="Helical" evidence="2">
    <location>
        <begin position="194"/>
        <end position="214"/>
    </location>
</feature>
<feature type="topological domain" description="Cytoplasmic" evidence="2">
    <location>
        <begin position="215"/>
        <end position="233"/>
    </location>
</feature>
<feature type="transmembrane region" description="Helical" evidence="2">
    <location>
        <begin position="234"/>
        <end position="254"/>
    </location>
</feature>
<feature type="topological domain" description="Extracellular" evidence="2">
    <location>
        <begin position="255"/>
        <end position="265"/>
    </location>
</feature>
<feature type="transmembrane region" description="Helical" evidence="2">
    <location>
        <begin position="266"/>
        <end position="286"/>
    </location>
</feature>
<feature type="topological domain" description="Cytoplasmic" evidence="2">
    <location>
        <begin position="287"/>
        <end position="299"/>
    </location>
</feature>
<feature type="transmembrane region" description="Helical" evidence="2">
    <location>
        <begin position="300"/>
        <end position="320"/>
    </location>
</feature>
<feature type="topological domain" description="Extracellular" evidence="2">
    <location>
        <position position="321"/>
    </location>
</feature>
<feature type="transmembrane region" description="Helical" evidence="2">
    <location>
        <begin position="322"/>
        <end position="342"/>
    </location>
</feature>
<feature type="topological domain" description="Cytoplasmic" evidence="2">
    <location>
        <begin position="343"/>
        <end position="357"/>
    </location>
</feature>
<feature type="transmembrane region" description="Helical" evidence="2">
    <location>
        <begin position="358"/>
        <end position="378"/>
    </location>
</feature>
<feature type="topological domain" description="Extracellular" evidence="2">
    <location>
        <begin position="379"/>
        <end position="410"/>
    </location>
</feature>
<feature type="transmembrane region" description="Helical" evidence="2">
    <location>
        <begin position="411"/>
        <end position="431"/>
    </location>
</feature>
<feature type="topological domain" description="Cytoplasmic" evidence="2">
    <location>
        <begin position="432"/>
        <end position="475"/>
    </location>
</feature>
<feature type="glycosylation site" description="N-linked (GlcNAc...) asparagine" evidence="2">
    <location>
        <position position="60"/>
    </location>
</feature>
<name>RHCG_TETNG</name>
<dbReference type="EMBL" id="AY865615">
    <property type="protein sequence ID" value="AAY41907.1"/>
    <property type="molecule type" value="mRNA"/>
</dbReference>
<dbReference type="EMBL" id="CAAE01014715">
    <property type="protein sequence ID" value="CAG03443.1"/>
    <property type="status" value="ALT_SEQ"/>
    <property type="molecule type" value="Genomic_DNA"/>
</dbReference>
<dbReference type="SMR" id="Q3BBX7"/>
<dbReference type="STRING" id="99883.ENSTNIP00000003600"/>
<dbReference type="GlyCosmos" id="Q3BBX7">
    <property type="glycosylation" value="1 site, No reported glycans"/>
</dbReference>
<dbReference type="KEGG" id="tng:GSTEN00022829G001"/>
<dbReference type="InParanoid" id="Q3BBX7"/>
<dbReference type="OrthoDB" id="534912at2759"/>
<dbReference type="Proteomes" id="UP000007303">
    <property type="component" value="Unassembled WGS sequence"/>
</dbReference>
<dbReference type="GO" id="GO:0016324">
    <property type="term" value="C:apical plasma membrane"/>
    <property type="evidence" value="ECO:0007669"/>
    <property type="project" value="UniProtKB-SubCell"/>
</dbReference>
<dbReference type="GO" id="GO:0008519">
    <property type="term" value="F:ammonium channel activity"/>
    <property type="evidence" value="ECO:0007669"/>
    <property type="project" value="InterPro"/>
</dbReference>
<dbReference type="GO" id="GO:0097272">
    <property type="term" value="P:ammonium homeostasis"/>
    <property type="evidence" value="ECO:0007669"/>
    <property type="project" value="TreeGrafter"/>
</dbReference>
<dbReference type="FunFam" id="1.10.3430.10:FF:000001">
    <property type="entry name" value="Ammonium transporter Rh type C"/>
    <property type="match status" value="1"/>
</dbReference>
<dbReference type="Gene3D" id="1.10.3430.10">
    <property type="entry name" value="Ammonium transporter AmtB like domains"/>
    <property type="match status" value="1"/>
</dbReference>
<dbReference type="InterPro" id="IPR029020">
    <property type="entry name" value="Ammonium/urea_transptr"/>
</dbReference>
<dbReference type="InterPro" id="IPR024041">
    <property type="entry name" value="NH4_transpt_AmtB-like_dom"/>
</dbReference>
<dbReference type="InterPro" id="IPR002229">
    <property type="entry name" value="RhesusRHD"/>
</dbReference>
<dbReference type="PANTHER" id="PTHR11730">
    <property type="entry name" value="AMMONIUM TRANSPORTER"/>
    <property type="match status" value="1"/>
</dbReference>
<dbReference type="PANTHER" id="PTHR11730:SF110">
    <property type="entry name" value="AMMONIUM TRANSPORTER RH TYPE C-LIKE 2"/>
    <property type="match status" value="1"/>
</dbReference>
<dbReference type="Pfam" id="PF00909">
    <property type="entry name" value="Ammonium_transp"/>
    <property type="match status" value="1"/>
</dbReference>
<dbReference type="PRINTS" id="PR00342">
    <property type="entry name" value="RHESUSRHD"/>
</dbReference>
<dbReference type="SUPFAM" id="SSF111352">
    <property type="entry name" value="Ammonium transporter"/>
    <property type="match status" value="1"/>
</dbReference>
<evidence type="ECO:0000250" key="1"/>
<evidence type="ECO:0000255" key="2"/>
<evidence type="ECO:0000305" key="3"/>
<keyword id="KW-0924">Ammonia transport</keyword>
<keyword id="KW-1003">Cell membrane</keyword>
<keyword id="KW-0325">Glycoprotein</keyword>
<keyword id="KW-0472">Membrane</keyword>
<keyword id="KW-1185">Reference proteome</keyword>
<keyword id="KW-0812">Transmembrane</keyword>
<keyword id="KW-1133">Transmembrane helix</keyword>
<keyword id="KW-0813">Transport</keyword>